<sequence>MRSRRLLSAAHLLCLCAVALAAPGSRFLVTAPGIIRPGANVTIGVDLLENSPPQVLVKAQVFKIASNKSRSILEAEGVFHRGHFKTLVLPALPLSSADKIYELHINGQSENEIVFSNRTRLTFESKSISVLIQTDKAFYKPKQEVKFRVLTLCSDLKPYRTSVDIFIKDPKSNVIQQWFSQKGDLGVVSKTFQLSSNPIFGDWSIQVQVNDQQYYQSFQVLEYVLPKFEVTVQTPLYCSLKSKQLNGSVIAKYTYGKPVKGSLSLTFLPLSFWGKKKNITKSFEINGFANFSFDNYEMKKVMNLKPLTDVSEGSYENVDPSFPGPAEIIATVTESLTGISRMASTNVFFKQHDYIIEIFDYTTVLKPSLNFTATVKVSRSDGNQLTPEEIENDLVTVVTQRKNNHPESQRDQEMDYIQTVNYTIPQNGIIKIEFPVMSISGELQLKAYFLDGTSSVTVHSMFTSPSKTYIQLKTRDEYIKVGSPFDLMVSGNRQFKDLSYMVISKGQLVAAGKQSSRTFSLTPEASWAPKACIIAYYIAEDGEIINDILKIPVQLVFENKVKLFWSKPTVKPSDKVSLRISATQSDSLVGIVAVDKSVTLMENSNSITMETMVHELELYNTEYYLGMFMNSFAVFQECGLWVLTDATLIRDSIDEVYDTEEYSERFAEENEANLVDFEDASSVNNVHVRKNFPETWIWLDAYMGSKIYEEFEVTVPDSITSWVASAFVISEDLGFGLTTVPAELQAFQPFFLFLNLPYSVIRGEEFALEVSIVNYLKDTIKVVILIEESDSFDILMTSNDTNGTIYRKTVQVPRDNGVTLVFPIKPTHLGEIPITVTAASPTASDAVTQTIVVKPEGIEKSYSKSVLLDLTDSNVESKQQSMRFSFPPDTVIGSERVQITAIGDILGSSINGLSSLIRMPYGCGEQNMIYFAPNIYILDYLTKQKQLTVNLKEKALSYMRQGYQRELLYQREDGSFSAFGDIDSSGSTWLSAFVLRCFLEADYYIDIDQDVLHRTYTWLNAHKKFNGEFWEPGRVIHSELQGGTKSPVTLTAYIVTSVLGYKKYQPNIDVQDSIKFLEFEFSRGISDNYTLAIISYALSTVGSPKAEEALNLLMQRSEKEGDTQFWLSSGPALSGSWQPRSVDIEIAAYALLAHTLHHVSEGIPVMRWLIQQRNSLGGFVSTQDTVVALKALSEFSALVHKENTDIQLTVTGPGIPRSIHFRIDSQNLFLLHQEELHALDPITVNVSAHGSGFAICQLNVDYNVKGSGSSKRRRSTENQEVFDLDVIVNNEDDISHLNLNVCTSHLGSERTGMVLMEVNLLSGFSASSDSIPLSETLKKVEYDNGKLNLYLDSVNESQFCVNIPTVRDYKVSNIRDGSVSVMDYYEPRRQAVRSYNTQVKLSSCYLSPDTNCKSHTDGATDSLRRSSSLLVFCSVLLYFVQH</sequence>
<organism>
    <name type="scientific">Mus musculus</name>
    <name type="common">Mouse</name>
    <dbReference type="NCBI Taxonomy" id="10090"/>
    <lineage>
        <taxon>Eukaryota</taxon>
        <taxon>Metazoa</taxon>
        <taxon>Chordata</taxon>
        <taxon>Craniata</taxon>
        <taxon>Vertebrata</taxon>
        <taxon>Euteleostomi</taxon>
        <taxon>Mammalia</taxon>
        <taxon>Eutheria</taxon>
        <taxon>Euarchontoglires</taxon>
        <taxon>Glires</taxon>
        <taxon>Rodentia</taxon>
        <taxon>Myomorpha</taxon>
        <taxon>Muroidea</taxon>
        <taxon>Muridae</taxon>
        <taxon>Murinae</taxon>
        <taxon>Mus</taxon>
        <taxon>Mus</taxon>
    </lineage>
</organism>
<dbReference type="EMBL" id="AY083458">
    <property type="protein sequence ID" value="AAM00021.1"/>
    <property type="molecule type" value="mRNA"/>
</dbReference>
<dbReference type="EMBL" id="BC052443">
    <property type="protein sequence ID" value="AAH52443.1"/>
    <property type="molecule type" value="mRNA"/>
</dbReference>
<dbReference type="EMBL" id="AK042169">
    <property type="protein sequence ID" value="BAC31190.1"/>
    <property type="status" value="ALT_INIT"/>
    <property type="molecule type" value="mRNA"/>
</dbReference>
<dbReference type="CCDS" id="CCDS23365.1"/>
<dbReference type="RefSeq" id="NP_694738.1">
    <property type="nucleotide sequence ID" value="NM_153098.3"/>
</dbReference>
<dbReference type="SMR" id="Q8R422"/>
<dbReference type="BioGRID" id="231674">
    <property type="interactions" value="2"/>
</dbReference>
<dbReference type="FunCoup" id="Q8R422">
    <property type="interactions" value="594"/>
</dbReference>
<dbReference type="IntAct" id="Q8R422">
    <property type="interactions" value="1"/>
</dbReference>
<dbReference type="STRING" id="10090.ENSMUSP00000091330"/>
<dbReference type="MEROPS" id="I39.006"/>
<dbReference type="GlyCosmos" id="Q8R422">
    <property type="glycosylation" value="7 sites, No reported glycans"/>
</dbReference>
<dbReference type="GlyGen" id="Q8R422">
    <property type="glycosylation" value="11 sites, 5 N-linked glycans (5 sites), 1 O-linked glycan (1 site)"/>
</dbReference>
<dbReference type="iPTMnet" id="Q8R422"/>
<dbReference type="PhosphoSitePlus" id="Q8R422"/>
<dbReference type="SwissPalm" id="Q8R422"/>
<dbReference type="jPOST" id="Q8R422"/>
<dbReference type="PaxDb" id="10090-ENSMUSP00000091330"/>
<dbReference type="ProteomicsDB" id="281348"/>
<dbReference type="Pumba" id="Q8R422"/>
<dbReference type="Antibodypedia" id="2141">
    <property type="antibodies" value="404 antibodies from 33 providers"/>
</dbReference>
<dbReference type="DNASU" id="235505"/>
<dbReference type="Ensembl" id="ENSMUST00000093812.5">
    <property type="protein sequence ID" value="ENSMUSP00000091330.5"/>
    <property type="gene ID" value="ENSMUSG00000046186.9"/>
</dbReference>
<dbReference type="GeneID" id="235505"/>
<dbReference type="KEGG" id="mmu:235505"/>
<dbReference type="UCSC" id="uc009qur.2">
    <property type="organism name" value="mouse"/>
</dbReference>
<dbReference type="AGR" id="MGI:2445221"/>
<dbReference type="CTD" id="135228"/>
<dbReference type="MGI" id="MGI:2445221">
    <property type="gene designation" value="Cd109"/>
</dbReference>
<dbReference type="VEuPathDB" id="HostDB:ENSMUSG00000046186"/>
<dbReference type="eggNOG" id="KOG1366">
    <property type="taxonomic scope" value="Eukaryota"/>
</dbReference>
<dbReference type="GeneTree" id="ENSGT00940000155926"/>
<dbReference type="HOGENOM" id="CLU_001634_5_2_1"/>
<dbReference type="InParanoid" id="Q8R422"/>
<dbReference type="OMA" id="FMNSFTV"/>
<dbReference type="OrthoDB" id="9998011at2759"/>
<dbReference type="PhylomeDB" id="Q8R422"/>
<dbReference type="TreeFam" id="TF313285"/>
<dbReference type="Reactome" id="R-MMU-114608">
    <property type="pathway name" value="Platelet degranulation"/>
</dbReference>
<dbReference type="Reactome" id="R-MMU-163125">
    <property type="pathway name" value="Post-translational modification: synthesis of GPI-anchored proteins"/>
</dbReference>
<dbReference type="BioGRID-ORCS" id="235505">
    <property type="hits" value="2 hits in 80 CRISPR screens"/>
</dbReference>
<dbReference type="ChiTaRS" id="Cd109">
    <property type="organism name" value="mouse"/>
</dbReference>
<dbReference type="PRO" id="PR:Q8R422"/>
<dbReference type="Proteomes" id="UP000000589">
    <property type="component" value="Chromosome 9"/>
</dbReference>
<dbReference type="RNAct" id="Q8R422">
    <property type="molecule type" value="protein"/>
</dbReference>
<dbReference type="Bgee" id="ENSMUSG00000046186">
    <property type="expression patterns" value="Expressed in tail skin and 128 other cell types or tissues"/>
</dbReference>
<dbReference type="ExpressionAtlas" id="Q8R422">
    <property type="expression patterns" value="baseline and differential"/>
</dbReference>
<dbReference type="GO" id="GO:0005829">
    <property type="term" value="C:cytosol"/>
    <property type="evidence" value="ECO:0007669"/>
    <property type="project" value="Ensembl"/>
</dbReference>
<dbReference type="GO" id="GO:0005615">
    <property type="term" value="C:extracellular space"/>
    <property type="evidence" value="ECO:0007005"/>
    <property type="project" value="BHF-UCL"/>
</dbReference>
<dbReference type="GO" id="GO:0005886">
    <property type="term" value="C:plasma membrane"/>
    <property type="evidence" value="ECO:0007669"/>
    <property type="project" value="UniProtKB-SubCell"/>
</dbReference>
<dbReference type="GO" id="GO:0098552">
    <property type="term" value="C:side of membrane"/>
    <property type="evidence" value="ECO:0007669"/>
    <property type="project" value="UniProtKB-KW"/>
</dbReference>
<dbReference type="GO" id="GO:0004867">
    <property type="term" value="F:serine-type endopeptidase inhibitor activity"/>
    <property type="evidence" value="ECO:0007669"/>
    <property type="project" value="UniProtKB-KW"/>
</dbReference>
<dbReference type="GO" id="GO:0001942">
    <property type="term" value="P:hair follicle development"/>
    <property type="evidence" value="ECO:0000315"/>
    <property type="project" value="MGI"/>
</dbReference>
<dbReference type="GO" id="GO:0043616">
    <property type="term" value="P:keratinocyte proliferation"/>
    <property type="evidence" value="ECO:0000315"/>
    <property type="project" value="MGI"/>
</dbReference>
<dbReference type="GO" id="GO:0010839">
    <property type="term" value="P:negative regulation of keratinocyte proliferation"/>
    <property type="evidence" value="ECO:0000315"/>
    <property type="project" value="MGI"/>
</dbReference>
<dbReference type="GO" id="GO:2000647">
    <property type="term" value="P:negative regulation of stem cell proliferation"/>
    <property type="evidence" value="ECO:0000315"/>
    <property type="project" value="MGI"/>
</dbReference>
<dbReference type="GO" id="GO:0030512">
    <property type="term" value="P:negative regulation of transforming growth factor beta receptor signaling pathway"/>
    <property type="evidence" value="ECO:0007669"/>
    <property type="project" value="Ensembl"/>
</dbReference>
<dbReference type="GO" id="GO:0061045">
    <property type="term" value="P:negative regulation of wound healing"/>
    <property type="evidence" value="ECO:0007669"/>
    <property type="project" value="Ensembl"/>
</dbReference>
<dbReference type="GO" id="GO:0072675">
    <property type="term" value="P:osteoclast fusion"/>
    <property type="evidence" value="ECO:0000315"/>
    <property type="project" value="MGI"/>
</dbReference>
<dbReference type="GO" id="GO:0045616">
    <property type="term" value="P:regulation of keratinocyte differentiation"/>
    <property type="evidence" value="ECO:0000315"/>
    <property type="project" value="MGI"/>
</dbReference>
<dbReference type="GO" id="GO:0072089">
    <property type="term" value="P:stem cell proliferation"/>
    <property type="evidence" value="ECO:0000315"/>
    <property type="project" value="MGI"/>
</dbReference>
<dbReference type="CDD" id="cd02897">
    <property type="entry name" value="A2M_2"/>
    <property type="match status" value="1"/>
</dbReference>
<dbReference type="FunFam" id="1.50.10.20:FF:000001">
    <property type="entry name" value="CD109 isoform 1"/>
    <property type="match status" value="1"/>
</dbReference>
<dbReference type="FunFam" id="2.60.40.1940:FF:000003">
    <property type="entry name" value="CD109 isoform 1"/>
    <property type="match status" value="1"/>
</dbReference>
<dbReference type="FunFam" id="2.60.40.1930:FF:000001">
    <property type="entry name" value="CD109 isoform 3"/>
    <property type="match status" value="1"/>
</dbReference>
<dbReference type="FunFam" id="2.60.40.690:FF:000005">
    <property type="entry name" value="CD109 molecule"/>
    <property type="match status" value="1"/>
</dbReference>
<dbReference type="FunFam" id="2.60.40.10:FF:000155">
    <property type="entry name" value="complement C3 isoform X1"/>
    <property type="match status" value="1"/>
</dbReference>
<dbReference type="Gene3D" id="1.50.10.20">
    <property type="match status" value="1"/>
</dbReference>
<dbReference type="Gene3D" id="2.20.130.20">
    <property type="match status" value="1"/>
</dbReference>
<dbReference type="Gene3D" id="2.60.120.1540">
    <property type="match status" value="1"/>
</dbReference>
<dbReference type="Gene3D" id="2.60.40.1930">
    <property type="match status" value="2"/>
</dbReference>
<dbReference type="Gene3D" id="2.60.40.1940">
    <property type="match status" value="1"/>
</dbReference>
<dbReference type="Gene3D" id="2.60.40.2950">
    <property type="match status" value="1"/>
</dbReference>
<dbReference type="Gene3D" id="6.20.50.160">
    <property type="match status" value="1"/>
</dbReference>
<dbReference type="Gene3D" id="2.60.40.690">
    <property type="entry name" value="Alpha-macroglobulin, receptor-binding domain"/>
    <property type="match status" value="1"/>
</dbReference>
<dbReference type="Gene3D" id="2.60.40.10">
    <property type="entry name" value="Immunoglobulins"/>
    <property type="match status" value="1"/>
</dbReference>
<dbReference type="InterPro" id="IPR009048">
    <property type="entry name" value="A-macroglobulin_rcpt-bd"/>
</dbReference>
<dbReference type="InterPro" id="IPR036595">
    <property type="entry name" value="A-macroglobulin_rcpt-bd_sf"/>
</dbReference>
<dbReference type="InterPro" id="IPR050473">
    <property type="entry name" value="A2M/Complement_sys"/>
</dbReference>
<dbReference type="InterPro" id="IPR011625">
    <property type="entry name" value="A2M_N_BRD"/>
</dbReference>
<dbReference type="InterPro" id="IPR041813">
    <property type="entry name" value="A2M_TED"/>
</dbReference>
<dbReference type="InterPro" id="IPR047565">
    <property type="entry name" value="Alpha-macroglob_thiol-ester_cl"/>
</dbReference>
<dbReference type="InterPro" id="IPR011626">
    <property type="entry name" value="Alpha-macroglobulin_TED"/>
</dbReference>
<dbReference type="InterPro" id="IPR013783">
    <property type="entry name" value="Ig-like_fold"/>
</dbReference>
<dbReference type="InterPro" id="IPR014756">
    <property type="entry name" value="Ig_E-set"/>
</dbReference>
<dbReference type="InterPro" id="IPR001599">
    <property type="entry name" value="Macroglobln_a2"/>
</dbReference>
<dbReference type="InterPro" id="IPR019742">
    <property type="entry name" value="MacrogloblnA2_CS"/>
</dbReference>
<dbReference type="InterPro" id="IPR002890">
    <property type="entry name" value="MG2"/>
</dbReference>
<dbReference type="InterPro" id="IPR041555">
    <property type="entry name" value="MG3"/>
</dbReference>
<dbReference type="InterPro" id="IPR008930">
    <property type="entry name" value="Terpenoid_cyclase/PrenylTrfase"/>
</dbReference>
<dbReference type="PANTHER" id="PTHR11412:SF136">
    <property type="entry name" value="CD109 ANTIGEN"/>
    <property type="match status" value="1"/>
</dbReference>
<dbReference type="PANTHER" id="PTHR11412">
    <property type="entry name" value="MACROGLOBULIN / COMPLEMENT"/>
    <property type="match status" value="1"/>
</dbReference>
<dbReference type="Pfam" id="PF00207">
    <property type="entry name" value="A2M"/>
    <property type="match status" value="1"/>
</dbReference>
<dbReference type="Pfam" id="PF07703">
    <property type="entry name" value="A2M_BRD"/>
    <property type="match status" value="1"/>
</dbReference>
<dbReference type="Pfam" id="PF07677">
    <property type="entry name" value="A2M_recep"/>
    <property type="match status" value="1"/>
</dbReference>
<dbReference type="Pfam" id="PF01835">
    <property type="entry name" value="MG2"/>
    <property type="match status" value="1"/>
</dbReference>
<dbReference type="Pfam" id="PF17791">
    <property type="entry name" value="MG3"/>
    <property type="match status" value="1"/>
</dbReference>
<dbReference type="Pfam" id="PF07678">
    <property type="entry name" value="TED_complement"/>
    <property type="match status" value="1"/>
</dbReference>
<dbReference type="SMART" id="SM01360">
    <property type="entry name" value="A2M"/>
    <property type="match status" value="1"/>
</dbReference>
<dbReference type="SMART" id="SM01359">
    <property type="entry name" value="A2M_N_2"/>
    <property type="match status" value="1"/>
</dbReference>
<dbReference type="SMART" id="SM01361">
    <property type="entry name" value="A2M_recep"/>
    <property type="match status" value="1"/>
</dbReference>
<dbReference type="SMART" id="SM01419">
    <property type="entry name" value="Thiol-ester_cl"/>
    <property type="match status" value="1"/>
</dbReference>
<dbReference type="SUPFAM" id="SSF49410">
    <property type="entry name" value="Alpha-macroglobulin receptor domain"/>
    <property type="match status" value="1"/>
</dbReference>
<dbReference type="SUPFAM" id="SSF81296">
    <property type="entry name" value="E set domains"/>
    <property type="match status" value="1"/>
</dbReference>
<dbReference type="SUPFAM" id="SSF48239">
    <property type="entry name" value="Terpenoid cyclases/Protein prenyltransferases"/>
    <property type="match status" value="1"/>
</dbReference>
<dbReference type="PROSITE" id="PS00477">
    <property type="entry name" value="ALPHA_2_MACROGLOBULIN"/>
    <property type="match status" value="1"/>
</dbReference>
<evidence type="ECO:0000250" key="1"/>
<evidence type="ECO:0000255" key="2"/>
<evidence type="ECO:0000305" key="3"/>
<comment type="function">
    <text evidence="1">Modulates negatively TGFB1 signaling in keratinocytes.</text>
</comment>
<comment type="subunit">
    <text evidence="1">Heterodimer; disulfide-linked. Interacts with TGFB1 and TGFBR1. Forms a heteromeric complex with TGFBR1, TGFBR2 and TGFBR3 in a ligand-independent manner (By similarity).</text>
</comment>
<comment type="subcellular location">
    <subcellularLocation>
        <location evidence="1">Cell membrane</location>
        <topology evidence="1">Lipid-anchor</topology>
        <topology evidence="1">GPI-anchor</topology>
    </subcellularLocation>
</comment>
<comment type="PTM">
    <text evidence="1">N-glycosylated.</text>
</comment>
<comment type="PTM">
    <text evidence="1">2 forms of 150 (p150) and 120 kDa (p120) exist due to proteolytic degradation from a 180 kDa form.</text>
</comment>
<comment type="similarity">
    <text evidence="3">Belongs to the protease inhibitor I39 (alpha-2-macroglobulin) family.</text>
</comment>
<comment type="sequence caution" evidence="3">
    <conflict type="erroneous initiation">
        <sequence resource="EMBL-CDS" id="BAC31190"/>
    </conflict>
</comment>
<accession>Q8R422</accession>
<accession>Q8BLT6</accession>
<feature type="signal peptide" evidence="1">
    <location>
        <begin position="1"/>
        <end position="21"/>
    </location>
</feature>
<feature type="chain" id="PRO_0000255947" description="CD109 antigen">
    <location>
        <begin position="22"/>
        <end position="1419"/>
    </location>
</feature>
<feature type="propeptide" id="PRO_0000255948" description="Removed in mature form" evidence="2">
    <location>
        <begin position="1420"/>
        <end position="1442"/>
    </location>
</feature>
<feature type="region of interest" description="Bait region (approximate)" evidence="1">
    <location>
        <begin position="595"/>
        <end position="704"/>
    </location>
</feature>
<feature type="lipid moiety-binding region" description="GPI-anchor amidated alanine" evidence="2">
    <location>
        <position position="1419"/>
    </location>
</feature>
<feature type="glycosylation site" description="N-linked (GlcNAc...) asparagine" evidence="2">
    <location>
        <position position="67"/>
    </location>
</feature>
<feature type="glycosylation site" description="N-linked (GlcNAc...) asparagine" evidence="2">
    <location>
        <position position="117"/>
    </location>
</feature>
<feature type="glycosylation site" description="N-linked (GlcNAc...) asparagine" evidence="2">
    <location>
        <position position="246"/>
    </location>
</feature>
<feature type="glycosylation site" description="N-linked (GlcNAc...) asparagine" evidence="2">
    <location>
        <position position="278"/>
    </location>
</feature>
<feature type="glycosylation site" description="N-linked (GlcNAc...) asparagine" evidence="2">
    <location>
        <position position="370"/>
    </location>
</feature>
<feature type="glycosylation site" description="N-linked (GlcNAc...) asparagine" evidence="2">
    <location>
        <position position="421"/>
    </location>
</feature>
<feature type="glycosylation site" description="N-linked (GlcNAc...) asparagine" evidence="2">
    <location>
        <position position="1088"/>
    </location>
</feature>
<feature type="cross-link" description="Isoglutamyl cysteine thioester (Cys-Gln)" evidence="1">
    <location>
        <begin position="923"/>
        <end position="926"/>
    </location>
</feature>
<keyword id="KW-0082">Bait region</keyword>
<keyword id="KW-1003">Cell membrane</keyword>
<keyword id="KW-1015">Disulfide bond</keyword>
<keyword id="KW-0325">Glycoprotein</keyword>
<keyword id="KW-0336">GPI-anchor</keyword>
<keyword id="KW-0449">Lipoprotein</keyword>
<keyword id="KW-0472">Membrane</keyword>
<keyword id="KW-0646">Protease inhibitor</keyword>
<keyword id="KW-1185">Reference proteome</keyword>
<keyword id="KW-0722">Serine protease inhibitor</keyword>
<keyword id="KW-0732">Signal</keyword>
<keyword id="KW-0882">Thioester bond</keyword>
<protein>
    <recommendedName>
        <fullName>CD109 antigen</fullName>
    </recommendedName>
    <alternativeName>
        <fullName>GPI-anchored alpha-2 macroglobulin-related protein</fullName>
    </alternativeName>
    <cdAntigenName>CD109</cdAntigenName>
</protein>
<proteinExistence type="evidence at protein level"/>
<gene>
    <name type="primary">Cd109</name>
</gene>
<name>CD109_MOUSE</name>
<reference key="1">
    <citation type="submission" date="2002-03" db="EMBL/GenBank/DDBJ databases">
        <title>Cloning and characterization of GPI-anchored alpha-2 macroglobulin-related protein.</title>
        <authorList>
            <person name="Hashimoto M."/>
            <person name="Ichihara M."/>
            <person name="Takahashi M."/>
        </authorList>
    </citation>
    <scope>NUCLEOTIDE SEQUENCE [MRNA]</scope>
</reference>
<reference key="2">
    <citation type="journal article" date="2004" name="Genome Res.">
        <title>The status, quality, and expansion of the NIH full-length cDNA project: the Mammalian Gene Collection (MGC).</title>
        <authorList>
            <consortium name="The MGC Project Team"/>
        </authorList>
    </citation>
    <scope>NUCLEOTIDE SEQUENCE [LARGE SCALE MRNA]</scope>
    <source>
        <strain>C57BL/6J</strain>
        <tissue>Brain</tissue>
    </source>
</reference>
<reference key="3">
    <citation type="journal article" date="2005" name="Science">
        <title>The transcriptional landscape of the mammalian genome.</title>
        <authorList>
            <person name="Carninci P."/>
            <person name="Kasukawa T."/>
            <person name="Katayama S."/>
            <person name="Gough J."/>
            <person name="Frith M.C."/>
            <person name="Maeda N."/>
            <person name="Oyama R."/>
            <person name="Ravasi T."/>
            <person name="Lenhard B."/>
            <person name="Wells C."/>
            <person name="Kodzius R."/>
            <person name="Shimokawa K."/>
            <person name="Bajic V.B."/>
            <person name="Brenner S.E."/>
            <person name="Batalov S."/>
            <person name="Forrest A.R."/>
            <person name="Zavolan M."/>
            <person name="Davis M.J."/>
            <person name="Wilming L.G."/>
            <person name="Aidinis V."/>
            <person name="Allen J.E."/>
            <person name="Ambesi-Impiombato A."/>
            <person name="Apweiler R."/>
            <person name="Aturaliya R.N."/>
            <person name="Bailey T.L."/>
            <person name="Bansal M."/>
            <person name="Baxter L."/>
            <person name="Beisel K.W."/>
            <person name="Bersano T."/>
            <person name="Bono H."/>
            <person name="Chalk A.M."/>
            <person name="Chiu K.P."/>
            <person name="Choudhary V."/>
            <person name="Christoffels A."/>
            <person name="Clutterbuck D.R."/>
            <person name="Crowe M.L."/>
            <person name="Dalla E."/>
            <person name="Dalrymple B.P."/>
            <person name="de Bono B."/>
            <person name="Della Gatta G."/>
            <person name="di Bernardo D."/>
            <person name="Down T."/>
            <person name="Engstrom P."/>
            <person name="Fagiolini M."/>
            <person name="Faulkner G."/>
            <person name="Fletcher C.F."/>
            <person name="Fukushima T."/>
            <person name="Furuno M."/>
            <person name="Futaki S."/>
            <person name="Gariboldi M."/>
            <person name="Georgii-Hemming P."/>
            <person name="Gingeras T.R."/>
            <person name="Gojobori T."/>
            <person name="Green R.E."/>
            <person name="Gustincich S."/>
            <person name="Harbers M."/>
            <person name="Hayashi Y."/>
            <person name="Hensch T.K."/>
            <person name="Hirokawa N."/>
            <person name="Hill D."/>
            <person name="Huminiecki L."/>
            <person name="Iacono M."/>
            <person name="Ikeo K."/>
            <person name="Iwama A."/>
            <person name="Ishikawa T."/>
            <person name="Jakt M."/>
            <person name="Kanapin A."/>
            <person name="Katoh M."/>
            <person name="Kawasawa Y."/>
            <person name="Kelso J."/>
            <person name="Kitamura H."/>
            <person name="Kitano H."/>
            <person name="Kollias G."/>
            <person name="Krishnan S.P."/>
            <person name="Kruger A."/>
            <person name="Kummerfeld S.K."/>
            <person name="Kurochkin I.V."/>
            <person name="Lareau L.F."/>
            <person name="Lazarevic D."/>
            <person name="Lipovich L."/>
            <person name="Liu J."/>
            <person name="Liuni S."/>
            <person name="McWilliam S."/>
            <person name="Madan Babu M."/>
            <person name="Madera M."/>
            <person name="Marchionni L."/>
            <person name="Matsuda H."/>
            <person name="Matsuzawa S."/>
            <person name="Miki H."/>
            <person name="Mignone F."/>
            <person name="Miyake S."/>
            <person name="Morris K."/>
            <person name="Mottagui-Tabar S."/>
            <person name="Mulder N."/>
            <person name="Nakano N."/>
            <person name="Nakauchi H."/>
            <person name="Ng P."/>
            <person name="Nilsson R."/>
            <person name="Nishiguchi S."/>
            <person name="Nishikawa S."/>
            <person name="Nori F."/>
            <person name="Ohara O."/>
            <person name="Okazaki Y."/>
            <person name="Orlando V."/>
            <person name="Pang K.C."/>
            <person name="Pavan W.J."/>
            <person name="Pavesi G."/>
            <person name="Pesole G."/>
            <person name="Petrovsky N."/>
            <person name="Piazza S."/>
            <person name="Reed J."/>
            <person name="Reid J.F."/>
            <person name="Ring B.Z."/>
            <person name="Ringwald M."/>
            <person name="Rost B."/>
            <person name="Ruan Y."/>
            <person name="Salzberg S.L."/>
            <person name="Sandelin A."/>
            <person name="Schneider C."/>
            <person name="Schoenbach C."/>
            <person name="Sekiguchi K."/>
            <person name="Semple C.A."/>
            <person name="Seno S."/>
            <person name="Sessa L."/>
            <person name="Sheng Y."/>
            <person name="Shibata Y."/>
            <person name="Shimada H."/>
            <person name="Shimada K."/>
            <person name="Silva D."/>
            <person name="Sinclair B."/>
            <person name="Sperling S."/>
            <person name="Stupka E."/>
            <person name="Sugiura K."/>
            <person name="Sultana R."/>
            <person name="Takenaka Y."/>
            <person name="Taki K."/>
            <person name="Tammoja K."/>
            <person name="Tan S.L."/>
            <person name="Tang S."/>
            <person name="Taylor M.S."/>
            <person name="Tegner J."/>
            <person name="Teichmann S.A."/>
            <person name="Ueda H.R."/>
            <person name="van Nimwegen E."/>
            <person name="Verardo R."/>
            <person name="Wei C.L."/>
            <person name="Yagi K."/>
            <person name="Yamanishi H."/>
            <person name="Zabarovsky E."/>
            <person name="Zhu S."/>
            <person name="Zimmer A."/>
            <person name="Hide W."/>
            <person name="Bult C."/>
            <person name="Grimmond S.M."/>
            <person name="Teasdale R.D."/>
            <person name="Liu E.T."/>
            <person name="Brusic V."/>
            <person name="Quackenbush J."/>
            <person name="Wahlestedt C."/>
            <person name="Mattick J.S."/>
            <person name="Hume D.A."/>
            <person name="Kai C."/>
            <person name="Sasaki D."/>
            <person name="Tomaru Y."/>
            <person name="Fukuda S."/>
            <person name="Kanamori-Katayama M."/>
            <person name="Suzuki M."/>
            <person name="Aoki J."/>
            <person name="Arakawa T."/>
            <person name="Iida J."/>
            <person name="Imamura K."/>
            <person name="Itoh M."/>
            <person name="Kato T."/>
            <person name="Kawaji H."/>
            <person name="Kawagashira N."/>
            <person name="Kawashima T."/>
            <person name="Kojima M."/>
            <person name="Kondo S."/>
            <person name="Konno H."/>
            <person name="Nakano K."/>
            <person name="Ninomiya N."/>
            <person name="Nishio T."/>
            <person name="Okada M."/>
            <person name="Plessy C."/>
            <person name="Shibata K."/>
            <person name="Shiraki T."/>
            <person name="Suzuki S."/>
            <person name="Tagami M."/>
            <person name="Waki K."/>
            <person name="Watahiki A."/>
            <person name="Okamura-Oho Y."/>
            <person name="Suzuki H."/>
            <person name="Kawai J."/>
            <person name="Hayashizaki Y."/>
        </authorList>
    </citation>
    <scope>NUCLEOTIDE SEQUENCE [LARGE SCALE MRNA] OF 1126-1442</scope>
    <source>
        <strain>C57BL/6J</strain>
        <tissue>Thymus</tissue>
    </source>
</reference>
<reference key="4">
    <citation type="journal article" date="2010" name="Cell">
        <title>A tissue-specific atlas of mouse protein phosphorylation and expression.</title>
        <authorList>
            <person name="Huttlin E.L."/>
            <person name="Jedrychowski M.P."/>
            <person name="Elias J.E."/>
            <person name="Goswami T."/>
            <person name="Rad R."/>
            <person name="Beausoleil S.A."/>
            <person name="Villen J."/>
            <person name="Haas W."/>
            <person name="Sowa M.E."/>
            <person name="Gygi S.P."/>
        </authorList>
    </citation>
    <scope>IDENTIFICATION BY MASS SPECTROMETRY [LARGE SCALE ANALYSIS]</scope>
    <source>
        <tissue>Heart</tissue>
        <tissue>Kidney</tissue>
        <tissue>Lung</tissue>
        <tissue>Testis</tissue>
    </source>
</reference>